<sequence length="190" mass="21162">MNEITDKNLPTLERATLGGGCFWCLEAVYQQIQGVKSVVSGYAGGARPNPSYESVCTGATGHAEIVDIEFDPKVVSFRDLLEIFFVIHNPTTLNYQGNDHGTQYRSVIYTHSDEQAKIANEVVQELEDSKIYADPVVTQIESAPTIYPAEDYHQNYFQQHPHQGYCAAVVAPKLAKFRAKFKSLIAPQYA</sequence>
<comment type="function">
    <text evidence="1">Has an important function as a repair enzyme for proteins that have been inactivated by oxidation. Catalyzes the reversible oxidation-reduction of methionine sulfoxide in proteins to methionine.</text>
</comment>
<comment type="catalytic activity">
    <reaction evidence="1">
        <text>L-methionyl-[protein] + [thioredoxin]-disulfide + H2O = L-methionyl-(S)-S-oxide-[protein] + [thioredoxin]-dithiol</text>
        <dbReference type="Rhea" id="RHEA:14217"/>
        <dbReference type="Rhea" id="RHEA-COMP:10698"/>
        <dbReference type="Rhea" id="RHEA-COMP:10700"/>
        <dbReference type="Rhea" id="RHEA-COMP:12313"/>
        <dbReference type="Rhea" id="RHEA-COMP:12315"/>
        <dbReference type="ChEBI" id="CHEBI:15377"/>
        <dbReference type="ChEBI" id="CHEBI:16044"/>
        <dbReference type="ChEBI" id="CHEBI:29950"/>
        <dbReference type="ChEBI" id="CHEBI:44120"/>
        <dbReference type="ChEBI" id="CHEBI:50058"/>
        <dbReference type="EC" id="1.8.4.11"/>
    </reaction>
</comment>
<comment type="catalytic activity">
    <reaction evidence="1">
        <text>[thioredoxin]-disulfide + L-methionine + H2O = L-methionine (S)-S-oxide + [thioredoxin]-dithiol</text>
        <dbReference type="Rhea" id="RHEA:19993"/>
        <dbReference type="Rhea" id="RHEA-COMP:10698"/>
        <dbReference type="Rhea" id="RHEA-COMP:10700"/>
        <dbReference type="ChEBI" id="CHEBI:15377"/>
        <dbReference type="ChEBI" id="CHEBI:29950"/>
        <dbReference type="ChEBI" id="CHEBI:50058"/>
        <dbReference type="ChEBI" id="CHEBI:57844"/>
        <dbReference type="ChEBI" id="CHEBI:58772"/>
        <dbReference type="EC" id="1.8.4.11"/>
    </reaction>
</comment>
<comment type="similarity">
    <text evidence="1">Belongs to the MsrA Met sulfoxide reductase family.</text>
</comment>
<gene>
    <name evidence="1" type="primary">msrA</name>
    <name type="ordered locus">Pnuc_0662</name>
</gene>
<feature type="chain" id="PRO_1000087356" description="Peptide methionine sulfoxide reductase MsrA">
    <location>
        <begin position="1"/>
        <end position="190"/>
    </location>
</feature>
<feature type="active site" evidence="1">
    <location>
        <position position="21"/>
    </location>
</feature>
<dbReference type="EC" id="1.8.4.11" evidence="1"/>
<dbReference type="EMBL" id="CP000655">
    <property type="protein sequence ID" value="ABP33880.1"/>
    <property type="molecule type" value="Genomic_DNA"/>
</dbReference>
<dbReference type="RefSeq" id="WP_011902505.1">
    <property type="nucleotide sequence ID" value="NC_009379.1"/>
</dbReference>
<dbReference type="SMR" id="A4SWL6"/>
<dbReference type="GeneID" id="31481019"/>
<dbReference type="KEGG" id="pnu:Pnuc_0662"/>
<dbReference type="eggNOG" id="COG0225">
    <property type="taxonomic scope" value="Bacteria"/>
</dbReference>
<dbReference type="HOGENOM" id="CLU_031040_10_0_4"/>
<dbReference type="Proteomes" id="UP000000231">
    <property type="component" value="Chromosome"/>
</dbReference>
<dbReference type="GO" id="GO:0033744">
    <property type="term" value="F:L-methionine:thioredoxin-disulfide S-oxidoreductase activity"/>
    <property type="evidence" value="ECO:0007669"/>
    <property type="project" value="RHEA"/>
</dbReference>
<dbReference type="GO" id="GO:0008113">
    <property type="term" value="F:peptide-methionine (S)-S-oxide reductase activity"/>
    <property type="evidence" value="ECO:0007669"/>
    <property type="project" value="UniProtKB-UniRule"/>
</dbReference>
<dbReference type="GO" id="GO:0036211">
    <property type="term" value="P:protein modification process"/>
    <property type="evidence" value="ECO:0007669"/>
    <property type="project" value="UniProtKB-UniRule"/>
</dbReference>
<dbReference type="Gene3D" id="3.30.1060.10">
    <property type="entry name" value="Peptide methionine sulphoxide reductase MsrA"/>
    <property type="match status" value="1"/>
</dbReference>
<dbReference type="HAMAP" id="MF_01401">
    <property type="entry name" value="MsrA"/>
    <property type="match status" value="1"/>
</dbReference>
<dbReference type="InterPro" id="IPR002569">
    <property type="entry name" value="Met_Sox_Rdtase_MsrA_dom"/>
</dbReference>
<dbReference type="InterPro" id="IPR036509">
    <property type="entry name" value="Met_Sox_Rdtase_MsrA_sf"/>
</dbReference>
<dbReference type="NCBIfam" id="TIGR00401">
    <property type="entry name" value="msrA"/>
    <property type="match status" value="1"/>
</dbReference>
<dbReference type="PANTHER" id="PTHR43774">
    <property type="entry name" value="PEPTIDE METHIONINE SULFOXIDE REDUCTASE"/>
    <property type="match status" value="1"/>
</dbReference>
<dbReference type="PANTHER" id="PTHR43774:SF1">
    <property type="entry name" value="PEPTIDE METHIONINE SULFOXIDE REDUCTASE MSRA 2"/>
    <property type="match status" value="1"/>
</dbReference>
<dbReference type="Pfam" id="PF01625">
    <property type="entry name" value="PMSR"/>
    <property type="match status" value="1"/>
</dbReference>
<dbReference type="SUPFAM" id="SSF55068">
    <property type="entry name" value="Peptide methionine sulfoxide reductase"/>
    <property type="match status" value="1"/>
</dbReference>
<organism>
    <name type="scientific">Polynucleobacter asymbioticus (strain DSM 18221 / CIP 109841 / QLW-P1DMWA-1)</name>
    <name type="common">Polynucleobacter necessarius subsp. asymbioticus</name>
    <dbReference type="NCBI Taxonomy" id="312153"/>
    <lineage>
        <taxon>Bacteria</taxon>
        <taxon>Pseudomonadati</taxon>
        <taxon>Pseudomonadota</taxon>
        <taxon>Betaproteobacteria</taxon>
        <taxon>Burkholderiales</taxon>
        <taxon>Burkholderiaceae</taxon>
        <taxon>Polynucleobacter</taxon>
    </lineage>
</organism>
<name>MSRA_POLAQ</name>
<evidence type="ECO:0000255" key="1">
    <source>
        <dbReference type="HAMAP-Rule" id="MF_01401"/>
    </source>
</evidence>
<accession>A4SWL6</accession>
<keyword id="KW-0560">Oxidoreductase</keyword>
<keyword id="KW-1185">Reference proteome</keyword>
<reference key="1">
    <citation type="journal article" date="2012" name="Stand. Genomic Sci.">
        <title>Complete genome sequence of Polynucleobacter necessarius subsp. asymbioticus type strain (QLW-P1DMWA-1(T)).</title>
        <authorList>
            <person name="Meincke L."/>
            <person name="Copeland A."/>
            <person name="Lapidus A."/>
            <person name="Lucas S."/>
            <person name="Berry K.W."/>
            <person name="Del Rio T.G."/>
            <person name="Hammon N."/>
            <person name="Dalin E."/>
            <person name="Tice H."/>
            <person name="Pitluck S."/>
            <person name="Richardson P."/>
            <person name="Bruce D."/>
            <person name="Goodwin L."/>
            <person name="Han C."/>
            <person name="Tapia R."/>
            <person name="Detter J.C."/>
            <person name="Schmutz J."/>
            <person name="Brettin T."/>
            <person name="Larimer F."/>
            <person name="Land M."/>
            <person name="Hauser L."/>
            <person name="Kyrpides N.C."/>
            <person name="Ivanova N."/>
            <person name="Goker M."/>
            <person name="Woyke T."/>
            <person name="Wu Q.L."/>
            <person name="Pockl M."/>
            <person name="Hahn M.W."/>
            <person name="Klenk H.P."/>
        </authorList>
    </citation>
    <scope>NUCLEOTIDE SEQUENCE [LARGE SCALE GENOMIC DNA]</scope>
    <source>
        <strain>DSM 18221 / CIP 109841 / QLW-P1DMWA-1</strain>
    </source>
</reference>
<proteinExistence type="inferred from homology"/>
<protein>
    <recommendedName>
        <fullName evidence="1">Peptide methionine sulfoxide reductase MsrA</fullName>
        <shortName evidence="1">Protein-methionine-S-oxide reductase</shortName>
        <ecNumber evidence="1">1.8.4.11</ecNumber>
    </recommendedName>
    <alternativeName>
        <fullName evidence="1">Peptide-methionine (S)-S-oxide reductase</fullName>
        <shortName evidence="1">Peptide Met(O) reductase</shortName>
    </alternativeName>
</protein>